<dbReference type="EMBL" id="X80639">
    <property type="protein sequence ID" value="CAA56683.1"/>
    <property type="molecule type" value="Genomic_DNA"/>
</dbReference>
<dbReference type="PIR" id="S47062">
    <property type="entry name" value="S47062"/>
</dbReference>
<dbReference type="RefSeq" id="WP_011110369.1">
    <property type="nucleotide sequence ID" value="NZ_WWJQ01000082.1"/>
</dbReference>
<dbReference type="SMR" id="P0A4I4"/>
<dbReference type="GeneID" id="72450855"/>
<dbReference type="GO" id="GO:0005737">
    <property type="term" value="C:cytoplasm"/>
    <property type="evidence" value="ECO:0007669"/>
    <property type="project" value="UniProtKB-SubCell"/>
</dbReference>
<dbReference type="GO" id="GO:0005509">
    <property type="term" value="F:calcium ion binding"/>
    <property type="evidence" value="ECO:0007669"/>
    <property type="project" value="InterPro"/>
</dbReference>
<dbReference type="GO" id="GO:0003677">
    <property type="term" value="F:DNA binding"/>
    <property type="evidence" value="ECO:0007669"/>
    <property type="project" value="UniProtKB-KW"/>
</dbReference>
<dbReference type="GO" id="GO:0003700">
    <property type="term" value="F:DNA-binding transcription factor activity"/>
    <property type="evidence" value="ECO:0007669"/>
    <property type="project" value="InterPro"/>
</dbReference>
<dbReference type="GO" id="GO:0051606">
    <property type="term" value="P:detection of stimulus"/>
    <property type="evidence" value="ECO:0007669"/>
    <property type="project" value="InterPro"/>
</dbReference>
<dbReference type="GO" id="GO:0000160">
    <property type="term" value="P:phosphorelay signal transduction system"/>
    <property type="evidence" value="ECO:0007669"/>
    <property type="project" value="UniProtKB-KW"/>
</dbReference>
<dbReference type="GO" id="GO:0042173">
    <property type="term" value="P:regulation of sporulation resulting in formation of a cellular spore"/>
    <property type="evidence" value="ECO:0007669"/>
    <property type="project" value="InterPro"/>
</dbReference>
<dbReference type="GO" id="GO:0030435">
    <property type="term" value="P:sporulation resulting in formation of a cellular spore"/>
    <property type="evidence" value="ECO:0007669"/>
    <property type="project" value="UniProtKB-KW"/>
</dbReference>
<dbReference type="CDD" id="cd17561">
    <property type="entry name" value="REC_Spo0A"/>
    <property type="match status" value="1"/>
</dbReference>
<dbReference type="FunFam" id="1.10.10.10:FF:000107">
    <property type="entry name" value="Stage 0 sporulation protein A"/>
    <property type="match status" value="1"/>
</dbReference>
<dbReference type="FunFam" id="3.40.50.2300:FF:000154">
    <property type="entry name" value="Stage 0 sporulation protein A"/>
    <property type="match status" value="1"/>
</dbReference>
<dbReference type="Gene3D" id="3.40.50.2300">
    <property type="match status" value="1"/>
</dbReference>
<dbReference type="Gene3D" id="1.10.10.10">
    <property type="entry name" value="Winged helix-like DNA-binding domain superfamily/Winged helix DNA-binding domain"/>
    <property type="match status" value="1"/>
</dbReference>
<dbReference type="InterPro" id="IPR011006">
    <property type="entry name" value="CheY-like_superfamily"/>
</dbReference>
<dbReference type="InterPro" id="IPR016032">
    <property type="entry name" value="Sig_transdc_resp-reg_C-effctor"/>
</dbReference>
<dbReference type="InterPro" id="IPR001789">
    <property type="entry name" value="Sig_transdc_resp-reg_receiver"/>
</dbReference>
<dbReference type="InterPro" id="IPR014879">
    <property type="entry name" value="Spo0A_C"/>
</dbReference>
<dbReference type="InterPro" id="IPR012052">
    <property type="entry name" value="Spore_0_A"/>
</dbReference>
<dbReference type="InterPro" id="IPR052048">
    <property type="entry name" value="ST_Response_Regulator"/>
</dbReference>
<dbReference type="InterPro" id="IPR036388">
    <property type="entry name" value="WH-like_DNA-bd_sf"/>
</dbReference>
<dbReference type="NCBIfam" id="TIGR02875">
    <property type="entry name" value="spore_0_A"/>
    <property type="match status" value="1"/>
</dbReference>
<dbReference type="PANTHER" id="PTHR43228:SF5">
    <property type="entry name" value="STAGE 0 SPORULATION PROTEIN A"/>
    <property type="match status" value="1"/>
</dbReference>
<dbReference type="PANTHER" id="PTHR43228">
    <property type="entry name" value="TWO-COMPONENT RESPONSE REGULATOR"/>
    <property type="match status" value="1"/>
</dbReference>
<dbReference type="Pfam" id="PF00072">
    <property type="entry name" value="Response_reg"/>
    <property type="match status" value="1"/>
</dbReference>
<dbReference type="Pfam" id="PF08769">
    <property type="entry name" value="Spo0A_C"/>
    <property type="match status" value="1"/>
</dbReference>
<dbReference type="PIRSF" id="PIRSF002937">
    <property type="entry name" value="Res_reg_Spo0A"/>
    <property type="match status" value="1"/>
</dbReference>
<dbReference type="SMART" id="SM00448">
    <property type="entry name" value="REC"/>
    <property type="match status" value="1"/>
</dbReference>
<dbReference type="SUPFAM" id="SSF46894">
    <property type="entry name" value="C-terminal effector domain of the bipartite response regulators"/>
    <property type="match status" value="1"/>
</dbReference>
<dbReference type="SUPFAM" id="SSF52172">
    <property type="entry name" value="CheY-like"/>
    <property type="match status" value="1"/>
</dbReference>
<dbReference type="PROSITE" id="PS50110">
    <property type="entry name" value="RESPONSE_REGULATORY"/>
    <property type="match status" value="1"/>
</dbReference>
<gene>
    <name type="primary">spo0A</name>
</gene>
<keyword id="KW-0010">Activator</keyword>
<keyword id="KW-0106">Calcium</keyword>
<keyword id="KW-0963">Cytoplasm</keyword>
<keyword id="KW-0238">DNA-binding</keyword>
<keyword id="KW-0479">Metal-binding</keyword>
<keyword id="KW-0597">Phosphoprotein</keyword>
<keyword id="KW-0678">Repressor</keyword>
<keyword id="KW-0749">Sporulation</keyword>
<keyword id="KW-0804">Transcription</keyword>
<keyword id="KW-0805">Transcription regulation</keyword>
<keyword id="KW-0902">Two-component regulatory system</keyword>
<comment type="function">
    <text evidence="1">May play the central regulatory role in sporulation. It may be an element of the effector pathway responsible for the activation of sporulation genes in response to nutritional stress. Spo0A may act in concert with Spo0H (a sigma factor) to control the expression of some genes that are critical to the sporulation process. Repressor of abrB, activator of the spoIIa operon. Binds the DNA sequence 5'-TGNCGAA-3' (0A box) (By similarity).</text>
</comment>
<comment type="cofactor">
    <cofactor evidence="1">
        <name>Ca(2+)</name>
        <dbReference type="ChEBI" id="CHEBI:29108"/>
    </cofactor>
    <text evidence="1">Binds 1 Ca(2+) ion per subunit.</text>
</comment>
<comment type="subcellular location">
    <subcellularLocation>
        <location evidence="4">Cytoplasm</location>
    </subcellularLocation>
</comment>
<comment type="PTM">
    <text evidence="1">Phosphorylated by KinA and KinB.</text>
</comment>
<evidence type="ECO:0000250" key="1"/>
<evidence type="ECO:0000255" key="2"/>
<evidence type="ECO:0000255" key="3">
    <source>
        <dbReference type="PROSITE-ProRule" id="PRU00169"/>
    </source>
</evidence>
<evidence type="ECO:0000305" key="4"/>
<protein>
    <recommendedName>
        <fullName>Stage 0 sporulation protein A</fullName>
    </recommendedName>
</protein>
<organism>
    <name type="scientific">Bacillus thuringiensis</name>
    <dbReference type="NCBI Taxonomy" id="1428"/>
    <lineage>
        <taxon>Bacteria</taxon>
        <taxon>Bacillati</taxon>
        <taxon>Bacillota</taxon>
        <taxon>Bacilli</taxon>
        <taxon>Bacillales</taxon>
        <taxon>Bacillaceae</taxon>
        <taxon>Bacillus</taxon>
        <taxon>Bacillus cereus group</taxon>
    </lineage>
</organism>
<sequence>MEKIKVCLVDDNKELVSMLESYVAAQDDMEVIGTAYNGQECLNLLTDKQPDVLVLDIIMPHLDGLAVLEKMRHIERLKQPSVIMLTAFGQEDVTKKAVDLGASYFILKPFDMENLTSHIRQVSGKANAMIKRPLPSFRSATTVDGKPKNLDASITSIIHEIGVPAHIKGYMYLREAISMVYNDIELLGSITKVLYPDIAKKYNTTASRVERAIRHAIEVAWSRGNIDSISSLFGYTVSMSKAKPTNSEFIAMVADKLRLEHKAS</sequence>
<accession>P0A4I4</accession>
<accession>P52935</accession>
<proteinExistence type="inferred from homology"/>
<reference key="1">
    <citation type="journal article" date="1995" name="Biotechnology (N.Y.)">
        <title>Overproduction of encapsulated insecticidal crystal proteins in a Bacillus thuringiensis spo0A mutant.</title>
        <authorList>
            <person name="Lereclus D."/>
            <person name="Agaisse H."/>
            <person name="Gominet M."/>
            <person name="Chaufaux J."/>
        </authorList>
    </citation>
    <scope>NUCLEOTIDE SEQUENCE [GENOMIC DNA]</scope>
    <source>
        <strain>407</strain>
    </source>
</reference>
<feature type="chain" id="PRO_0000081235" description="Stage 0 sporulation protein A">
    <location>
        <begin position="1"/>
        <end position="264"/>
    </location>
</feature>
<feature type="domain" description="Response regulatory" evidence="3">
    <location>
        <begin position="5"/>
        <end position="123"/>
    </location>
</feature>
<feature type="DNA-binding region" description="H-T-H motif" evidence="2">
    <location>
        <begin position="196"/>
        <end position="215"/>
    </location>
</feature>
<feature type="binding site" evidence="1">
    <location>
        <position position="10"/>
    </location>
    <ligand>
        <name>Ca(2+)</name>
        <dbReference type="ChEBI" id="CHEBI:29108"/>
    </ligand>
</feature>
<feature type="binding site" evidence="1">
    <location>
        <position position="11"/>
    </location>
    <ligand>
        <name>Ca(2+)</name>
        <dbReference type="ChEBI" id="CHEBI:29108"/>
    </ligand>
</feature>
<feature type="binding site" evidence="1">
    <location>
        <position position="56"/>
    </location>
    <ligand>
        <name>Ca(2+)</name>
        <dbReference type="ChEBI" id="CHEBI:29108"/>
    </ligand>
</feature>
<feature type="modified residue" description="4-aspartylphosphate" evidence="3">
    <location>
        <position position="56"/>
    </location>
</feature>
<name>SP0A_BACTU</name>